<evidence type="ECO:0000255" key="1">
    <source>
        <dbReference type="HAMAP-Rule" id="MF_03005"/>
    </source>
</evidence>
<evidence type="ECO:0000255" key="2">
    <source>
        <dbReference type="PROSITE-ProRule" id="PRU01182"/>
    </source>
</evidence>
<protein>
    <recommendedName>
        <fullName evidence="1">Eukaryotic translation initiation factor 3 subunit F-1</fullName>
        <shortName evidence="1">eIF3f-1</shortName>
    </recommendedName>
    <alternativeName>
        <fullName evidence="1">Eukaryotic translation initiation factor 3 subunit 5-1</fullName>
    </alternativeName>
</protein>
<dbReference type="EMBL" id="CH480821">
    <property type="protein sequence ID" value="EDW54864.1"/>
    <property type="molecule type" value="Genomic_DNA"/>
</dbReference>
<dbReference type="SMR" id="B4I3S1"/>
<dbReference type="STRING" id="7238.B4I3S1"/>
<dbReference type="EnsemblMetazoa" id="FBtr0193673">
    <property type="protein sequence ID" value="FBpp0192165"/>
    <property type="gene ID" value="FBgn0165634"/>
</dbReference>
<dbReference type="EnsemblMetazoa" id="XM_002038291.2">
    <property type="protein sequence ID" value="XP_002038327.1"/>
    <property type="gene ID" value="LOC6613858"/>
</dbReference>
<dbReference type="GeneID" id="6613858"/>
<dbReference type="KEGG" id="dse:6613858"/>
<dbReference type="CTD" id="40587"/>
<dbReference type="HOGENOM" id="CLU_027018_0_1_1"/>
<dbReference type="OMA" id="EYFVHFH"/>
<dbReference type="OrthoDB" id="14039at7215"/>
<dbReference type="PhylomeDB" id="B4I3S1"/>
<dbReference type="Proteomes" id="UP000001292">
    <property type="component" value="Unassembled WGS sequence"/>
</dbReference>
<dbReference type="GO" id="GO:0016282">
    <property type="term" value="C:eukaryotic 43S preinitiation complex"/>
    <property type="evidence" value="ECO:0007669"/>
    <property type="project" value="UniProtKB-UniRule"/>
</dbReference>
<dbReference type="GO" id="GO:0033290">
    <property type="term" value="C:eukaryotic 48S preinitiation complex"/>
    <property type="evidence" value="ECO:0007669"/>
    <property type="project" value="UniProtKB-UniRule"/>
</dbReference>
<dbReference type="GO" id="GO:0071541">
    <property type="term" value="C:eukaryotic translation initiation factor 3 complex, eIF3m"/>
    <property type="evidence" value="ECO:0007669"/>
    <property type="project" value="TreeGrafter"/>
</dbReference>
<dbReference type="GO" id="GO:0140492">
    <property type="term" value="F:metal-dependent deubiquitinase activity"/>
    <property type="evidence" value="ECO:0007669"/>
    <property type="project" value="EnsemblMetazoa"/>
</dbReference>
<dbReference type="GO" id="GO:0003743">
    <property type="term" value="F:translation initiation factor activity"/>
    <property type="evidence" value="ECO:0007669"/>
    <property type="project" value="UniProtKB-UniRule"/>
</dbReference>
<dbReference type="GO" id="GO:0031369">
    <property type="term" value="F:translation initiation factor binding"/>
    <property type="evidence" value="ECO:0007669"/>
    <property type="project" value="InterPro"/>
</dbReference>
<dbReference type="GO" id="GO:0140367">
    <property type="term" value="P:antibacterial innate immune response"/>
    <property type="evidence" value="ECO:0007669"/>
    <property type="project" value="EnsemblMetazoa"/>
</dbReference>
<dbReference type="GO" id="GO:0050829">
    <property type="term" value="P:defense response to Gram-negative bacterium"/>
    <property type="evidence" value="ECO:0007669"/>
    <property type="project" value="EnsemblMetazoa"/>
</dbReference>
<dbReference type="GO" id="GO:0001732">
    <property type="term" value="P:formation of cytoplasmic translation initiation complex"/>
    <property type="evidence" value="ECO:0007669"/>
    <property type="project" value="UniProtKB-UniRule"/>
</dbReference>
<dbReference type="GO" id="GO:0045747">
    <property type="term" value="P:positive regulation of Notch signaling pathway"/>
    <property type="evidence" value="ECO:0007669"/>
    <property type="project" value="EnsemblMetazoa"/>
</dbReference>
<dbReference type="GO" id="GO:0061059">
    <property type="term" value="P:positive regulation of peptidoglycan recognition protein signaling pathway"/>
    <property type="evidence" value="ECO:0007669"/>
    <property type="project" value="EnsemblMetazoa"/>
</dbReference>
<dbReference type="CDD" id="cd08064">
    <property type="entry name" value="MPN_eIF3f"/>
    <property type="match status" value="1"/>
</dbReference>
<dbReference type="FunFam" id="3.40.140.10:FF:000014">
    <property type="entry name" value="Eukaryotic translation initiation factor 3 subunit F"/>
    <property type="match status" value="1"/>
</dbReference>
<dbReference type="Gene3D" id="3.40.140.10">
    <property type="entry name" value="Cytidine Deaminase, domain 2"/>
    <property type="match status" value="1"/>
</dbReference>
<dbReference type="HAMAP" id="MF_03005">
    <property type="entry name" value="eIF3f"/>
    <property type="match status" value="1"/>
</dbReference>
<dbReference type="InterPro" id="IPR027531">
    <property type="entry name" value="eIF3f"/>
</dbReference>
<dbReference type="InterPro" id="IPR024969">
    <property type="entry name" value="EIF3F/CSN6-like_C"/>
</dbReference>
<dbReference type="InterPro" id="IPR000555">
    <property type="entry name" value="JAMM/MPN+_dom"/>
</dbReference>
<dbReference type="InterPro" id="IPR037518">
    <property type="entry name" value="MPN"/>
</dbReference>
<dbReference type="PANTHER" id="PTHR10540:SF6">
    <property type="entry name" value="EUKARYOTIC TRANSLATION INITIATION FACTOR 3 SUBUNIT F"/>
    <property type="match status" value="1"/>
</dbReference>
<dbReference type="PANTHER" id="PTHR10540">
    <property type="entry name" value="EUKARYOTIC TRANSLATION INITIATION FACTOR 3 SUBUNIT F-RELATED"/>
    <property type="match status" value="1"/>
</dbReference>
<dbReference type="Pfam" id="PF01398">
    <property type="entry name" value="JAB"/>
    <property type="match status" value="1"/>
</dbReference>
<dbReference type="Pfam" id="PF13012">
    <property type="entry name" value="MitMem_reg"/>
    <property type="match status" value="1"/>
</dbReference>
<dbReference type="SMART" id="SM00232">
    <property type="entry name" value="JAB_MPN"/>
    <property type="match status" value="1"/>
</dbReference>
<dbReference type="PROSITE" id="PS50249">
    <property type="entry name" value="MPN"/>
    <property type="match status" value="1"/>
</dbReference>
<sequence>MSALNLTVRVHPVVLFQVVDAFERRNADSHRVIGTLLGSVDKGVVEVTNCFCVPHKEHDDQVEAELSYALDMYDLNRKVNSNESVVGWWATGNDVTNHSSVIHEYYARECNNPVHLTVDTSLQGGRMGLRAYVCIQLGVPGGKSGCMFTPIPVELTSYEPETFGLKLLQKTVGVSPAHRPKTVPPMLDLAQISEASTKLQSLLDLILKYVDDVIAHKVTPDNAVGRQLLDLIHSVPHMTHEQFTQMFNANVRNLLLVITLSQLIKTQLQLNEKLTFLPTA</sequence>
<comment type="function">
    <text evidence="1">Component of the eukaryotic translation initiation factor 3 (eIF-3) complex, which is involved in protein synthesis of a specialized repertoire of mRNAs and, together with other initiation factors, stimulates binding of mRNA and methionyl-tRNAi to the 40S ribosome. The eIF-3 complex specifically targets and initiates translation of a subset of mRNAs involved in cell proliferation.</text>
</comment>
<comment type="subunit">
    <text evidence="1">Component of the eukaryotic translation initiation factor 3 (eIF-3) complex. The eIF-3 complex interacts with pix.</text>
</comment>
<comment type="subcellular location">
    <subcellularLocation>
        <location evidence="1">Cytoplasm</location>
    </subcellularLocation>
</comment>
<comment type="similarity">
    <text evidence="1">Belongs to the eIF-3 subunit F family.</text>
</comment>
<feature type="chain" id="PRO_0000364311" description="Eukaryotic translation initiation factor 3 subunit F-1">
    <location>
        <begin position="1"/>
        <end position="280"/>
    </location>
</feature>
<feature type="domain" description="MPN" evidence="2">
    <location>
        <begin position="8"/>
        <end position="138"/>
    </location>
</feature>
<reference key="1">
    <citation type="journal article" date="2007" name="Nature">
        <title>Evolution of genes and genomes on the Drosophila phylogeny.</title>
        <authorList>
            <consortium name="Drosophila 12 genomes consortium"/>
        </authorList>
    </citation>
    <scope>NUCLEOTIDE SEQUENCE [LARGE SCALE GENOMIC DNA]</scope>
    <source>
        <strain>Rob3c / Tucson 14021-0248.25</strain>
    </source>
</reference>
<gene>
    <name evidence="1" type="primary">eIF3f1</name>
    <name evidence="1" type="synonym">eIF3-S5-1</name>
    <name type="ORF">GM10688</name>
</gene>
<accession>B4I3S1</accession>
<proteinExistence type="inferred from homology"/>
<name>EI3F1_DROSE</name>
<keyword id="KW-0963">Cytoplasm</keyword>
<keyword id="KW-0396">Initiation factor</keyword>
<keyword id="KW-0648">Protein biosynthesis</keyword>
<keyword id="KW-1185">Reference proteome</keyword>
<organism>
    <name type="scientific">Drosophila sechellia</name>
    <name type="common">Fruit fly</name>
    <dbReference type="NCBI Taxonomy" id="7238"/>
    <lineage>
        <taxon>Eukaryota</taxon>
        <taxon>Metazoa</taxon>
        <taxon>Ecdysozoa</taxon>
        <taxon>Arthropoda</taxon>
        <taxon>Hexapoda</taxon>
        <taxon>Insecta</taxon>
        <taxon>Pterygota</taxon>
        <taxon>Neoptera</taxon>
        <taxon>Endopterygota</taxon>
        <taxon>Diptera</taxon>
        <taxon>Brachycera</taxon>
        <taxon>Muscomorpha</taxon>
        <taxon>Ephydroidea</taxon>
        <taxon>Drosophilidae</taxon>
        <taxon>Drosophila</taxon>
        <taxon>Sophophora</taxon>
    </lineage>
</organism>